<protein>
    <recommendedName>
        <fullName>Histone-lysine N-methyltransferase SETDB2</fullName>
        <ecNumber evidence="2">2.1.1.366</ecNumber>
    </recommendedName>
    <alternativeName>
        <fullName>SET domain bifurcated 2</fullName>
    </alternativeName>
</protein>
<name>SETB2_DANRE</name>
<gene>
    <name type="primary">setdb2</name>
    <name type="ORF">zgc:77298</name>
</gene>
<keyword id="KW-0131">Cell cycle</keyword>
<keyword id="KW-0132">Cell division</keyword>
<keyword id="KW-0156">Chromatin regulator</keyword>
<keyword id="KW-0158">Chromosome</keyword>
<keyword id="KW-0217">Developmental protein</keyword>
<keyword id="KW-0479">Metal-binding</keyword>
<keyword id="KW-0489">Methyltransferase</keyword>
<keyword id="KW-0498">Mitosis</keyword>
<keyword id="KW-0539">Nucleus</keyword>
<keyword id="KW-1185">Reference proteome</keyword>
<keyword id="KW-0949">S-adenosyl-L-methionine</keyword>
<keyword id="KW-0808">Transferase</keyword>
<keyword id="KW-0862">Zinc</keyword>
<organism>
    <name type="scientific">Danio rerio</name>
    <name type="common">Zebrafish</name>
    <name type="synonym">Brachydanio rerio</name>
    <dbReference type="NCBI Taxonomy" id="7955"/>
    <lineage>
        <taxon>Eukaryota</taxon>
        <taxon>Metazoa</taxon>
        <taxon>Chordata</taxon>
        <taxon>Craniata</taxon>
        <taxon>Vertebrata</taxon>
        <taxon>Euteleostomi</taxon>
        <taxon>Actinopterygii</taxon>
        <taxon>Neopterygii</taxon>
        <taxon>Teleostei</taxon>
        <taxon>Ostariophysi</taxon>
        <taxon>Cypriniformes</taxon>
        <taxon>Danionidae</taxon>
        <taxon>Danioninae</taxon>
        <taxon>Danio</taxon>
    </lineage>
</organism>
<feature type="chain" id="PRO_0000398646" description="Histone-lysine N-methyltransferase SETDB2">
    <location>
        <begin position="1"/>
        <end position="551"/>
    </location>
</feature>
<feature type="domain" description="MBD">
    <location>
        <begin position="146"/>
        <end position="210"/>
    </location>
</feature>
<feature type="domain" description="Pre-SET" evidence="3">
    <location>
        <begin position="269"/>
        <end position="329"/>
    </location>
</feature>
<feature type="domain" description="SET" evidence="4">
    <location>
        <begin position="332"/>
        <end position="537"/>
    </location>
</feature>
<feature type="region of interest" description="Disordered" evidence="5">
    <location>
        <begin position="426"/>
        <end position="447"/>
    </location>
</feature>
<feature type="binding site" evidence="1">
    <location>
        <position position="271"/>
    </location>
    <ligand>
        <name>Zn(2+)</name>
        <dbReference type="ChEBI" id="CHEBI:29105"/>
        <label>1</label>
    </ligand>
</feature>
<feature type="binding site" evidence="1">
    <location>
        <position position="271"/>
    </location>
    <ligand>
        <name>Zn(2+)</name>
        <dbReference type="ChEBI" id="CHEBI:29105"/>
        <label>2</label>
    </ligand>
</feature>
<feature type="binding site" evidence="1">
    <location>
        <position position="273"/>
    </location>
    <ligand>
        <name>Zn(2+)</name>
        <dbReference type="ChEBI" id="CHEBI:29105"/>
        <label>1</label>
    </ligand>
</feature>
<feature type="binding site" evidence="1">
    <location>
        <position position="277"/>
    </location>
    <ligand>
        <name>Zn(2+)</name>
        <dbReference type="ChEBI" id="CHEBI:29105"/>
        <label>1</label>
    </ligand>
</feature>
<feature type="binding site" evidence="1">
    <location>
        <position position="277"/>
    </location>
    <ligand>
        <name>Zn(2+)</name>
        <dbReference type="ChEBI" id="CHEBI:29105"/>
        <label>3</label>
    </ligand>
</feature>
<feature type="binding site" evidence="1">
    <location>
        <position position="283"/>
    </location>
    <ligand>
        <name>Zn(2+)</name>
        <dbReference type="ChEBI" id="CHEBI:29105"/>
        <label>1</label>
    </ligand>
</feature>
<feature type="binding site" evidence="1">
    <location>
        <position position="285"/>
    </location>
    <ligand>
        <name>Zn(2+)</name>
        <dbReference type="ChEBI" id="CHEBI:29105"/>
        <label>2</label>
    </ligand>
</feature>
<feature type="binding site" evidence="1">
    <location>
        <position position="310"/>
    </location>
    <ligand>
        <name>Zn(2+)</name>
        <dbReference type="ChEBI" id="CHEBI:29105"/>
        <label>2</label>
    </ligand>
</feature>
<feature type="binding site" evidence="1">
    <location>
        <position position="310"/>
    </location>
    <ligand>
        <name>Zn(2+)</name>
        <dbReference type="ChEBI" id="CHEBI:29105"/>
        <label>3</label>
    </ligand>
</feature>
<feature type="binding site" evidence="1">
    <location>
        <position position="314"/>
    </location>
    <ligand>
        <name>Zn(2+)</name>
        <dbReference type="ChEBI" id="CHEBI:29105"/>
        <label>2</label>
    </ligand>
</feature>
<feature type="binding site" evidence="1">
    <location>
        <position position="316"/>
    </location>
    <ligand>
        <name>Zn(2+)</name>
        <dbReference type="ChEBI" id="CHEBI:29105"/>
        <label>3</label>
    </ligand>
</feature>
<feature type="binding site" evidence="1">
    <location>
        <position position="321"/>
    </location>
    <ligand>
        <name>Zn(2+)</name>
        <dbReference type="ChEBI" id="CHEBI:29105"/>
        <label>3</label>
    </ligand>
</feature>
<feature type="binding site" evidence="1">
    <location>
        <begin position="342"/>
        <end position="344"/>
    </location>
    <ligand>
        <name>S-adenosyl-L-methionine</name>
        <dbReference type="ChEBI" id="CHEBI:59789"/>
    </ligand>
</feature>
<feature type="binding site" evidence="4">
    <location>
        <position position="491"/>
    </location>
    <ligand>
        <name>S-adenosyl-L-methionine</name>
        <dbReference type="ChEBI" id="CHEBI:59789"/>
    </ligand>
</feature>
<feature type="binding site" evidence="1">
    <location>
        <begin position="494"/>
        <end position="495"/>
    </location>
    <ligand>
        <name>S-adenosyl-L-methionine</name>
        <dbReference type="ChEBI" id="CHEBI:59789"/>
    </ligand>
</feature>
<feature type="sequence conflict" description="In Ref. 1; ABC88479." evidence="7" ref="1">
    <original>D</original>
    <variation>E</variation>
    <location>
        <position position="166"/>
    </location>
</feature>
<feature type="sequence conflict" description="In Ref. 1; ABC88479." evidence="7" ref="1">
    <original>S</original>
    <variation>I</variation>
    <location>
        <position position="194"/>
    </location>
</feature>
<feature type="sequence conflict" description="In Ref. 1; ABC88479." evidence="7" ref="1">
    <original>R</original>
    <variation>H</variation>
    <location>
        <position position="202"/>
    </location>
</feature>
<feature type="sequence conflict" description="In Ref. 1; ABC88479." evidence="7" ref="1">
    <original>HS</original>
    <variation>QR</variation>
    <location>
        <begin position="281"/>
        <end position="282"/>
    </location>
</feature>
<feature type="sequence conflict" description="In Ref. 1; ABC88479." evidence="7" ref="1">
    <original>R</original>
    <variation>C</variation>
    <location>
        <position position="320"/>
    </location>
</feature>
<feature type="sequence conflict" description="In Ref. 1; ABC88479." evidence="7" ref="1">
    <original>M</original>
    <variation>R</variation>
    <location>
        <position position="343"/>
    </location>
</feature>
<feature type="sequence conflict" description="In Ref. 1; ABC88479." evidence="7" ref="1">
    <original>NR</original>
    <variation>DQ</variation>
    <location>
        <begin position="445"/>
        <end position="446"/>
    </location>
</feature>
<evidence type="ECO:0000250" key="1"/>
<evidence type="ECO:0000250" key="2">
    <source>
        <dbReference type="UniProtKB" id="Q96T68"/>
    </source>
</evidence>
<evidence type="ECO:0000255" key="3">
    <source>
        <dbReference type="PROSITE-ProRule" id="PRU00157"/>
    </source>
</evidence>
<evidence type="ECO:0000255" key="4">
    <source>
        <dbReference type="PROSITE-ProRule" id="PRU00190"/>
    </source>
</evidence>
<evidence type="ECO:0000256" key="5">
    <source>
        <dbReference type="SAM" id="MobiDB-lite"/>
    </source>
</evidence>
<evidence type="ECO:0000269" key="6">
    <source>
    </source>
</evidence>
<evidence type="ECO:0000305" key="7"/>
<reference key="1">
    <citation type="journal article" date="2004" name="Proc. Natl. Acad. Sci. U.S.A.">
        <title>Hematopoietic gene expression profile in zebrafish kidney marrow.</title>
        <authorList>
            <person name="Song H.-D."/>
            <person name="Sun X.-J."/>
            <person name="Deng M."/>
            <person name="Zhang G.-W."/>
            <person name="Zhou Y."/>
            <person name="Wu X.-Y."/>
            <person name="Sheng Y."/>
            <person name="Chen Y."/>
            <person name="Ruan Z."/>
            <person name="Jiang C.-L."/>
            <person name="Fan H.-Y."/>
            <person name="Zon L.I."/>
            <person name="Kanki J.P."/>
            <person name="Liu T.X."/>
            <person name="Look A.T."/>
            <person name="Chen Z."/>
        </authorList>
    </citation>
    <scope>NUCLEOTIDE SEQUENCE [LARGE SCALE MRNA]</scope>
    <source>
        <tissue>Kidney marrow</tissue>
    </source>
</reference>
<reference key="2">
    <citation type="submission" date="2004-02" db="EMBL/GenBank/DDBJ databases">
        <authorList>
            <consortium name="NIH - Zebrafish Gene Collection (ZGC) project"/>
        </authorList>
    </citation>
    <scope>NUCLEOTIDE SEQUENCE [LARGE SCALE MRNA]</scope>
    <source>
        <tissue>Embryo</tissue>
    </source>
</reference>
<reference key="3">
    <citation type="journal article" date="2010" name="Proc. Natl. Acad. Sci. U.S.A.">
        <title>Setdb2 restricts dorsal organizer territory and regulates left-right asymmetry through suppressing fgf8 activity.</title>
        <authorList>
            <person name="Xu P.F."/>
            <person name="Zhu K.Y."/>
            <person name="Jin Y."/>
            <person name="Chen Y."/>
            <person name="Sun X.J."/>
            <person name="Deng M."/>
            <person name="Chen S.J."/>
            <person name="Chen Z."/>
            <person name="Liu T.X."/>
        </authorList>
    </citation>
    <scope>FUNCTION</scope>
    <scope>DEVELOPMENTAL STAGE</scope>
    <scope>DISRUPTION PHENOTYPE</scope>
</reference>
<comment type="function">
    <text evidence="6">Histone methyltransferase involved in left-right axis specification in early development and mitosis. Specifically trimethylates 'Lys-9' of histone H3 (H3K9me3). H3K9me3 represents a specific tag for epigenetic transcriptional repression by recruiting HP1 (CBX1, CBX3 and/or CBX5) proteins to methylated histones. Contributes to H3K9me3 in both the interspersed repetitive elements and centromere-associated repeats. Plays a role in chromosome condensation and segregation during mitosis. During early development, required to specify the left-right axis by repressing expression of FGF8, leading to negatively regulate the dorsal organizer formation.</text>
</comment>
<comment type="catalytic activity">
    <reaction evidence="2">
        <text>N(6),N(6)-dimethyl-L-lysyl(9)-[histone H3] + S-adenosyl-L-methionine = N(6),N(6),N(6)-trimethyl-L-lysyl(9)-[histone H3] + S-adenosyl-L-homocysteine + H(+)</text>
        <dbReference type="Rhea" id="RHEA:60288"/>
        <dbReference type="Rhea" id="RHEA-COMP:15538"/>
        <dbReference type="Rhea" id="RHEA-COMP:15541"/>
        <dbReference type="ChEBI" id="CHEBI:15378"/>
        <dbReference type="ChEBI" id="CHEBI:57856"/>
        <dbReference type="ChEBI" id="CHEBI:59789"/>
        <dbReference type="ChEBI" id="CHEBI:61961"/>
        <dbReference type="ChEBI" id="CHEBI:61976"/>
        <dbReference type="EC" id="2.1.1.366"/>
    </reaction>
</comment>
<comment type="subcellular location">
    <subcellularLocation>
        <location evidence="1">Nucleus</location>
    </subcellularLocation>
    <subcellularLocation>
        <location evidence="1">Chromosome</location>
    </subcellularLocation>
</comment>
<comment type="developmental stage">
    <text evidence="6">Expressed both maternally and zygotically. Expressed throughout embryogenesis.</text>
</comment>
<comment type="domain">
    <text evidence="1">In the pre-SET domain, Cys residues bind 3 zinc ions that are arranged in a triangular cluster; some of these Cys residues contribute to the binding of two zinc ions within the cluster.</text>
</comment>
<comment type="disruption phenotype">
    <text evidence="6">Randomization of left-right asymmetry, including heart and visceral organs.</text>
</comment>
<comment type="similarity">
    <text evidence="4">Belongs to the class V-like SAM-binding methyltransferase superfamily.</text>
</comment>
<accession>Q06ZW3</accession>
<accession>Q6NZ23</accession>
<sequence length="551" mass="62424">METEADTAKTFWSEVDVDGVFDELMEVLRRLRHTLRHNTATDREYVQAMRIVQESKLIRTETEDVLLDEDILTVTVSEPQCSPESLQNGIEPEDPQHSTARLYSDVGVVCSHMSSSRPDPAAPLVFQPHVCSSACVPHLPAHTHHLLGHNPLRAPLLCHFQRVCDDAGVVYKAPCGRSLSCMQEVLHFLLQTQSVCVLQTDRFSFSTQVCVERQVCAAPLLERDLSRGLEPVPVALVNTVDGARPREFRYRRERWPHGCFLSAEPLYSVCCDCTDGCTDAHSCACVRRTAGAAYTHQRLTHTLRTGLFECGPWCGCERSRCENRVVQKGLRVRLQVFRTPEHMWAVRCRDDLDAGTFICIYAGVVLRLQQSSECPAERSGEPAVSDDEVQLVEEWRIPEETHTHTHTLDSSPPLHVPVIQRPAEHSLAQRRDQQQFSISSETEDNRCEQALRKKPRLMESNGLQDSRTHTLTHTHDGVYYLDASREGNVARFFTHSDDPNLFIQNVFTDTHDPQFPLIAFFTCRPVKAGTELTWSCTNTEQQKTEEKHCSV</sequence>
<proteinExistence type="evidence at transcript level"/>
<dbReference type="EC" id="2.1.1.366" evidence="2"/>
<dbReference type="EMBL" id="DQ358104">
    <property type="protein sequence ID" value="ABC88479.1"/>
    <property type="molecule type" value="mRNA"/>
</dbReference>
<dbReference type="EMBL" id="BC066376">
    <property type="protein sequence ID" value="AAH66376.1"/>
    <property type="molecule type" value="mRNA"/>
</dbReference>
<dbReference type="RefSeq" id="NP_996941.1">
    <property type="nucleotide sequence ID" value="NM_207058.1"/>
</dbReference>
<dbReference type="STRING" id="7955.ENSDARP00000129972"/>
<dbReference type="GeneID" id="335153"/>
<dbReference type="KEGG" id="dre:335153"/>
<dbReference type="AGR" id="ZFIN:ZDB-GENE-030131-7093"/>
<dbReference type="CTD" id="83852"/>
<dbReference type="ZFIN" id="ZDB-GENE-030131-7093">
    <property type="gene designation" value="setdb2"/>
</dbReference>
<dbReference type="InParanoid" id="Q06ZW3"/>
<dbReference type="OrthoDB" id="5792673at2759"/>
<dbReference type="PhylomeDB" id="Q06ZW3"/>
<dbReference type="PRO" id="PR:Q06ZW3"/>
<dbReference type="Proteomes" id="UP000000437">
    <property type="component" value="Unplaced"/>
</dbReference>
<dbReference type="GO" id="GO:0005694">
    <property type="term" value="C:chromosome"/>
    <property type="evidence" value="ECO:0007669"/>
    <property type="project" value="UniProtKB-SubCell"/>
</dbReference>
<dbReference type="GO" id="GO:0005634">
    <property type="term" value="C:nucleus"/>
    <property type="evidence" value="ECO:0000250"/>
    <property type="project" value="UniProtKB"/>
</dbReference>
<dbReference type="GO" id="GO:0003677">
    <property type="term" value="F:DNA binding"/>
    <property type="evidence" value="ECO:0007669"/>
    <property type="project" value="InterPro"/>
</dbReference>
<dbReference type="GO" id="GO:0046974">
    <property type="term" value="F:histone H3K9 methyltransferase activity"/>
    <property type="evidence" value="ECO:0000315"/>
    <property type="project" value="UniProtKB"/>
</dbReference>
<dbReference type="GO" id="GO:0140948">
    <property type="term" value="F:histone H3K9 monomethyltransferase activity"/>
    <property type="evidence" value="ECO:0007669"/>
    <property type="project" value="RHEA"/>
</dbReference>
<dbReference type="GO" id="GO:0008270">
    <property type="term" value="F:zinc ion binding"/>
    <property type="evidence" value="ECO:0007669"/>
    <property type="project" value="InterPro"/>
</dbReference>
<dbReference type="GO" id="GO:0051301">
    <property type="term" value="P:cell division"/>
    <property type="evidence" value="ECO:0007669"/>
    <property type="project" value="UniProtKB-KW"/>
</dbReference>
<dbReference type="GO" id="GO:0007059">
    <property type="term" value="P:chromosome segregation"/>
    <property type="evidence" value="ECO:0000250"/>
    <property type="project" value="UniProtKB"/>
</dbReference>
<dbReference type="GO" id="GO:0060027">
    <property type="term" value="P:convergent extension involved in gastrulation"/>
    <property type="evidence" value="ECO:0000315"/>
    <property type="project" value="ZFIN"/>
</dbReference>
<dbReference type="GO" id="GO:0007368">
    <property type="term" value="P:determination of left/right symmetry"/>
    <property type="evidence" value="ECO:0000315"/>
    <property type="project" value="ZFIN"/>
</dbReference>
<dbReference type="GO" id="GO:0001947">
    <property type="term" value="P:heart looping"/>
    <property type="evidence" value="ECO:0000315"/>
    <property type="project" value="UniProtKB"/>
</dbReference>
<dbReference type="GO" id="GO:0070828">
    <property type="term" value="P:heterochromatin organization"/>
    <property type="evidence" value="ECO:0000318"/>
    <property type="project" value="GO_Central"/>
</dbReference>
<dbReference type="GO" id="GO:0070986">
    <property type="term" value="P:left/right axis specification"/>
    <property type="evidence" value="ECO:0000315"/>
    <property type="project" value="UniProtKB"/>
</dbReference>
<dbReference type="GO" id="GO:0032259">
    <property type="term" value="P:methylation"/>
    <property type="evidence" value="ECO:0007669"/>
    <property type="project" value="UniProtKB-KW"/>
</dbReference>
<dbReference type="GO" id="GO:0000278">
    <property type="term" value="P:mitotic cell cycle"/>
    <property type="evidence" value="ECO:0000250"/>
    <property type="project" value="UniProtKB"/>
</dbReference>
<dbReference type="GO" id="GO:0045892">
    <property type="term" value="P:negative regulation of DNA-templated transcription"/>
    <property type="evidence" value="ECO:0000315"/>
    <property type="project" value="UniProtKB"/>
</dbReference>
<dbReference type="GO" id="GO:0010629">
    <property type="term" value="P:negative regulation of gene expression"/>
    <property type="evidence" value="ECO:0000318"/>
    <property type="project" value="GO_Central"/>
</dbReference>
<dbReference type="Gene3D" id="2.170.270.10">
    <property type="entry name" value="SET domain"/>
    <property type="match status" value="1"/>
</dbReference>
<dbReference type="InterPro" id="IPR016177">
    <property type="entry name" value="DNA-bd_dom_sf"/>
</dbReference>
<dbReference type="InterPro" id="IPR001739">
    <property type="entry name" value="Methyl_CpG_DNA-bd"/>
</dbReference>
<dbReference type="InterPro" id="IPR007728">
    <property type="entry name" value="Pre-SET_dom"/>
</dbReference>
<dbReference type="InterPro" id="IPR001214">
    <property type="entry name" value="SET_dom"/>
</dbReference>
<dbReference type="InterPro" id="IPR046341">
    <property type="entry name" value="SET_dom_sf"/>
</dbReference>
<dbReference type="InterPro" id="IPR051516">
    <property type="entry name" value="SETDB_methyltransferase"/>
</dbReference>
<dbReference type="PANTHER" id="PTHR46024">
    <property type="entry name" value="HISTONE-LYSINE N-METHYLTRANSFERASE EGGLESS"/>
    <property type="match status" value="1"/>
</dbReference>
<dbReference type="PANTHER" id="PTHR46024:SF3">
    <property type="entry name" value="HISTONE-LYSINE N-METHYLTRANSFERASE SETDB2"/>
    <property type="match status" value="1"/>
</dbReference>
<dbReference type="Pfam" id="PF01429">
    <property type="entry name" value="MBD"/>
    <property type="match status" value="1"/>
</dbReference>
<dbReference type="Pfam" id="PF05033">
    <property type="entry name" value="Pre-SET"/>
    <property type="match status" value="1"/>
</dbReference>
<dbReference type="Pfam" id="PF00856">
    <property type="entry name" value="SET"/>
    <property type="match status" value="1"/>
</dbReference>
<dbReference type="SMART" id="SM00391">
    <property type="entry name" value="MBD"/>
    <property type="match status" value="1"/>
</dbReference>
<dbReference type="SMART" id="SM00468">
    <property type="entry name" value="PreSET"/>
    <property type="match status" value="1"/>
</dbReference>
<dbReference type="SMART" id="SM00317">
    <property type="entry name" value="SET"/>
    <property type="match status" value="1"/>
</dbReference>
<dbReference type="SUPFAM" id="SSF54171">
    <property type="entry name" value="DNA-binding domain"/>
    <property type="match status" value="1"/>
</dbReference>
<dbReference type="SUPFAM" id="SSF82199">
    <property type="entry name" value="SET domain"/>
    <property type="match status" value="1"/>
</dbReference>
<dbReference type="PROSITE" id="PS50867">
    <property type="entry name" value="PRE_SET"/>
    <property type="match status" value="1"/>
</dbReference>
<dbReference type="PROSITE" id="PS50280">
    <property type="entry name" value="SET"/>
    <property type="match status" value="1"/>
</dbReference>